<evidence type="ECO:0000250" key="1">
    <source>
        <dbReference type="UniProtKB" id="O43464"/>
    </source>
</evidence>
<evidence type="ECO:0000250" key="2">
    <source>
        <dbReference type="UniProtKB" id="Q9VFJ3"/>
    </source>
</evidence>
<evidence type="ECO:0000255" key="3"/>
<evidence type="ECO:0000255" key="4">
    <source>
        <dbReference type="PROSITE-ProRule" id="PRU00143"/>
    </source>
</evidence>
<evidence type="ECO:0000256" key="5">
    <source>
        <dbReference type="SAM" id="MobiDB-lite"/>
    </source>
</evidence>
<evidence type="ECO:0000312" key="6">
    <source>
        <dbReference type="EMBL" id="EDV48887.1"/>
    </source>
</evidence>
<name>HTRA2_DROER</name>
<feature type="transit peptide" description="Mitochondrion" evidence="3">
    <location>
        <begin position="1"/>
        <end position="17"/>
    </location>
</feature>
<feature type="propeptide" id="PRO_0000382183" evidence="3">
    <location>
        <begin position="18"/>
        <end position="74"/>
    </location>
</feature>
<feature type="chain" id="PRO_0000382184" description="Serine protease HTRA2, mitochondrial" evidence="2">
    <location>
        <begin position="75"/>
        <end position="422"/>
    </location>
</feature>
<feature type="transmembrane region" description="Helical" evidence="3">
    <location>
        <begin position="64"/>
        <end position="82"/>
    </location>
</feature>
<feature type="domain" description="PDZ" evidence="4">
    <location>
        <begin position="325"/>
        <end position="410"/>
    </location>
</feature>
<feature type="region of interest" description="Disordered" evidence="5">
    <location>
        <begin position="24"/>
        <end position="56"/>
    </location>
</feature>
<feature type="region of interest" description="Serine protease" evidence="3">
    <location>
        <begin position="139"/>
        <end position="302"/>
    </location>
</feature>
<feature type="short sequence motif" description="IAP-binding" evidence="3">
    <location>
        <begin position="75"/>
        <end position="78"/>
    </location>
</feature>
<feature type="short sequence motif" description="IAP-binding" evidence="3">
    <location>
        <begin position="94"/>
        <end position="97"/>
    </location>
</feature>
<feature type="compositionally biased region" description="Polar residues" evidence="5">
    <location>
        <begin position="41"/>
        <end position="51"/>
    </location>
</feature>
<feature type="active site" description="Charge relay system" evidence="1">
    <location>
        <position position="157"/>
    </location>
</feature>
<feature type="active site" description="Charge relay system" evidence="1">
    <location>
        <position position="189"/>
    </location>
</feature>
<feature type="active site" description="Charge relay system" evidence="2">
    <location>
        <position position="266"/>
    </location>
</feature>
<gene>
    <name evidence="2" type="primary">HtrA2</name>
    <name type="ORF">GG21285</name>
</gene>
<reference evidence="6" key="1">
    <citation type="journal article" date="2007" name="Nature">
        <title>Evolution of genes and genomes on the Drosophila phylogeny.</title>
        <authorList>
            <consortium name="Drosophila 12 genomes consortium"/>
        </authorList>
    </citation>
    <scope>NUCLEOTIDE SEQUENCE [LARGE SCALE GENOMIC DNA]</scope>
    <source>
        <strain evidence="6">Tucson 14021-0224.01</strain>
    </source>
</reference>
<accession>B3P3J9</accession>
<sequence>MALRGSHRLQVILKRCIASPLFHSHAPNRRSSQPAIKGGEPNSNGNSGHDQQNGERKGKGWRRLVSFFVPFSLGAVVSAAVIKREDFTPTIAASKMTGRRRDFNFIADVVAGCADSVVYIEIKDTRHFDYFSGQPITASNGSGFIIEQNGLILTNAHVVINKPHTMVQVRLSDGRTFPATIEDVDQTSDLATLRIQVNNLSVMRLGKSSTLRSGEWVVALGSPLALSNTVTAGVISSTQRASQELGLRNRDINYLQTDAAITFGNSGGPLVNLDGEAIGVNSMKVTAGISFAIPIDYVKVFLERAAEKRKKGSAYKTGYPVKRYMGITMLTLTPDILFELKSRSQNMPSNLTHGVLVWKVIVGSPAHSGGLQPGDIVTHINKKEIKNSSDVYDALADNSKNLDIVILRGVKQMHVTITPEDP</sequence>
<organism>
    <name type="scientific">Drosophila erecta</name>
    <name type="common">Fruit fly</name>
    <dbReference type="NCBI Taxonomy" id="7220"/>
    <lineage>
        <taxon>Eukaryota</taxon>
        <taxon>Metazoa</taxon>
        <taxon>Ecdysozoa</taxon>
        <taxon>Arthropoda</taxon>
        <taxon>Hexapoda</taxon>
        <taxon>Insecta</taxon>
        <taxon>Pterygota</taxon>
        <taxon>Neoptera</taxon>
        <taxon>Endopterygota</taxon>
        <taxon>Diptera</taxon>
        <taxon>Brachycera</taxon>
        <taxon>Muscomorpha</taxon>
        <taxon>Ephydroidea</taxon>
        <taxon>Drosophilidae</taxon>
        <taxon>Drosophila</taxon>
        <taxon>Sophophora</taxon>
    </lineage>
</organism>
<protein>
    <recommendedName>
        <fullName evidence="2">Serine protease HTRA2, mitochondrial</fullName>
        <ecNumber>3.4.21.108</ecNumber>
    </recommendedName>
    <alternativeName>
        <fullName evidence="2">High temperature requirement protein A2</fullName>
    </alternativeName>
</protein>
<comment type="function">
    <text evidence="2">Serine protease that shows proteolytic activity against a non-specific substrate beta-casein. Promotes or induces cell death either by direct binding to and inhibition of BIRC proteins (also called inhibitor of apoptosis proteins, IAPs), leading to an increase in caspase activity, or by a BIRC inhibition-independent, caspase-independent and serine protease activity-dependent mechanism. Can antagonize antiapoptotic activity of th/Diap1 by directly inducing the degradation of th/Diap1 (By similarity).</text>
</comment>
<comment type="catalytic activity">
    <reaction>
        <text>Cleavage of non-polar aliphatic amino-acids at the P1 position, with a preference for Val, Ile and Met. At the P2 and P3 positions, Arg is selected most strongly with a secondary preference for other hydrophilic residues.</text>
        <dbReference type="EC" id="3.4.21.108"/>
    </reaction>
</comment>
<comment type="subunit">
    <text evidence="2">Interacts with th/DIAP1 (via BIR 2 domain).</text>
</comment>
<comment type="subcellular location">
    <subcellularLocation>
        <location evidence="2">Mitochondrion intermembrane space</location>
        <topology evidence="3">Single-pass membrane protein</topology>
    </subcellularLocation>
    <subcellularLocation>
        <location evidence="2">Mitochondrion membrane</location>
        <topology evidence="3">Single-pass membrane protein</topology>
    </subcellularLocation>
    <text evidence="2">Predominantly present in the intermembrane space. Released into the cytosol following apoptotic stimuli, such as UV treatment. The extramitochondrial protein does not diffuse throughout the cytosol but stays near the mitochondria.</text>
</comment>
<comment type="similarity">
    <text evidence="3">Belongs to the peptidase S1C family.</text>
</comment>
<dbReference type="EC" id="3.4.21.108"/>
<dbReference type="EMBL" id="CH954181">
    <property type="protein sequence ID" value="EDV48887.1"/>
    <property type="molecule type" value="Genomic_DNA"/>
</dbReference>
<dbReference type="SMR" id="B3P3J9"/>
<dbReference type="EnsemblMetazoa" id="FBtr0141339">
    <property type="protein sequence ID" value="FBpp0139831"/>
    <property type="gene ID" value="FBgn0113464"/>
</dbReference>
<dbReference type="EnsemblMetazoa" id="XM_001979893.3">
    <property type="protein sequence ID" value="XP_001979929.1"/>
    <property type="gene ID" value="LOC6552632"/>
</dbReference>
<dbReference type="GeneID" id="6552632"/>
<dbReference type="KEGG" id="der:6552632"/>
<dbReference type="CTD" id="27429"/>
<dbReference type="eggNOG" id="KOG1320">
    <property type="taxonomic scope" value="Eukaryota"/>
</dbReference>
<dbReference type="HOGENOM" id="CLU_020120_6_0_1"/>
<dbReference type="OMA" id="IMSPEGY"/>
<dbReference type="OrthoDB" id="4217619at2759"/>
<dbReference type="PhylomeDB" id="B3P3J9"/>
<dbReference type="Proteomes" id="UP000008711">
    <property type="component" value="Unassembled WGS sequence"/>
</dbReference>
<dbReference type="GO" id="GO:0005829">
    <property type="term" value="C:cytosol"/>
    <property type="evidence" value="ECO:0007669"/>
    <property type="project" value="EnsemblMetazoa"/>
</dbReference>
<dbReference type="GO" id="GO:0005758">
    <property type="term" value="C:mitochondrial intermembrane space"/>
    <property type="evidence" value="ECO:0007669"/>
    <property type="project" value="UniProtKB-SubCell"/>
</dbReference>
<dbReference type="GO" id="GO:0031966">
    <property type="term" value="C:mitochondrial membrane"/>
    <property type="evidence" value="ECO:0007669"/>
    <property type="project" value="UniProtKB-SubCell"/>
</dbReference>
<dbReference type="GO" id="GO:0016006">
    <property type="term" value="C:Nebenkern"/>
    <property type="evidence" value="ECO:0007669"/>
    <property type="project" value="EnsemblMetazoa"/>
</dbReference>
<dbReference type="GO" id="GO:0004252">
    <property type="term" value="F:serine-type endopeptidase activity"/>
    <property type="evidence" value="ECO:0007669"/>
    <property type="project" value="EnsemblMetazoa"/>
</dbReference>
<dbReference type="GO" id="GO:0006915">
    <property type="term" value="P:apoptotic process"/>
    <property type="evidence" value="ECO:0007669"/>
    <property type="project" value="UniProtKB-KW"/>
</dbReference>
<dbReference type="GO" id="GO:0035234">
    <property type="term" value="P:ectopic germ cell programmed cell death"/>
    <property type="evidence" value="ECO:0007669"/>
    <property type="project" value="EnsemblMetazoa"/>
</dbReference>
<dbReference type="GO" id="GO:0007005">
    <property type="term" value="P:mitochondrion organization"/>
    <property type="evidence" value="ECO:0007669"/>
    <property type="project" value="EnsemblMetazoa"/>
</dbReference>
<dbReference type="GO" id="GO:0043065">
    <property type="term" value="P:positive regulation of apoptotic process"/>
    <property type="evidence" value="ECO:0007669"/>
    <property type="project" value="EnsemblMetazoa"/>
</dbReference>
<dbReference type="GO" id="GO:0006508">
    <property type="term" value="P:proteolysis"/>
    <property type="evidence" value="ECO:0007669"/>
    <property type="project" value="UniProtKB-KW"/>
</dbReference>
<dbReference type="GO" id="GO:0007283">
    <property type="term" value="P:spermatogenesis"/>
    <property type="evidence" value="ECO:0007669"/>
    <property type="project" value="EnsemblMetazoa"/>
</dbReference>
<dbReference type="CDD" id="cd06785">
    <property type="entry name" value="cpPDZ_HtrA-like"/>
    <property type="match status" value="1"/>
</dbReference>
<dbReference type="FunFam" id="2.40.10.120:FF:000004">
    <property type="entry name" value="Serine protease HTRA2, mitochondrial"/>
    <property type="match status" value="1"/>
</dbReference>
<dbReference type="Gene3D" id="2.30.42.10">
    <property type="match status" value="1"/>
</dbReference>
<dbReference type="Gene3D" id="2.40.10.120">
    <property type="match status" value="1"/>
</dbReference>
<dbReference type="InterPro" id="IPR001478">
    <property type="entry name" value="PDZ"/>
</dbReference>
<dbReference type="InterPro" id="IPR041489">
    <property type="entry name" value="PDZ_6"/>
</dbReference>
<dbReference type="InterPro" id="IPR036034">
    <property type="entry name" value="PDZ_sf"/>
</dbReference>
<dbReference type="InterPro" id="IPR009003">
    <property type="entry name" value="Peptidase_S1_PA"/>
</dbReference>
<dbReference type="InterPro" id="IPR001940">
    <property type="entry name" value="Peptidase_S1C"/>
</dbReference>
<dbReference type="PANTHER" id="PTHR22939">
    <property type="entry name" value="SERINE PROTEASE FAMILY S1C HTRA-RELATED"/>
    <property type="match status" value="1"/>
</dbReference>
<dbReference type="PANTHER" id="PTHR22939:SF129">
    <property type="entry name" value="SERINE PROTEASE HTRA2, MITOCHONDRIAL"/>
    <property type="match status" value="1"/>
</dbReference>
<dbReference type="Pfam" id="PF17820">
    <property type="entry name" value="PDZ_6"/>
    <property type="match status" value="1"/>
</dbReference>
<dbReference type="Pfam" id="PF13365">
    <property type="entry name" value="Trypsin_2"/>
    <property type="match status" value="1"/>
</dbReference>
<dbReference type="PRINTS" id="PR00834">
    <property type="entry name" value="PROTEASES2C"/>
</dbReference>
<dbReference type="SMART" id="SM00228">
    <property type="entry name" value="PDZ"/>
    <property type="match status" value="1"/>
</dbReference>
<dbReference type="SUPFAM" id="SSF50156">
    <property type="entry name" value="PDZ domain-like"/>
    <property type="match status" value="1"/>
</dbReference>
<dbReference type="SUPFAM" id="SSF50494">
    <property type="entry name" value="Trypsin-like serine proteases"/>
    <property type="match status" value="1"/>
</dbReference>
<dbReference type="PROSITE" id="PS50106">
    <property type="entry name" value="PDZ"/>
    <property type="match status" value="1"/>
</dbReference>
<proteinExistence type="inferred from homology"/>
<keyword id="KW-0053">Apoptosis</keyword>
<keyword id="KW-0378">Hydrolase</keyword>
<keyword id="KW-0472">Membrane</keyword>
<keyword id="KW-0496">Mitochondrion</keyword>
<keyword id="KW-0645">Protease</keyword>
<keyword id="KW-0720">Serine protease</keyword>
<keyword id="KW-0809">Transit peptide</keyword>
<keyword id="KW-0812">Transmembrane</keyword>
<keyword id="KW-1133">Transmembrane helix</keyword>
<keyword id="KW-0865">Zymogen</keyword>